<comment type="function">
    <text evidence="1">Catalyzes the hydrolysis of inorganic pyrophosphate (PPi) forming two phosphate ions.</text>
</comment>
<comment type="catalytic activity">
    <reaction evidence="1">
        <text>diphosphate + H2O = 2 phosphate + H(+)</text>
        <dbReference type="Rhea" id="RHEA:24576"/>
        <dbReference type="ChEBI" id="CHEBI:15377"/>
        <dbReference type="ChEBI" id="CHEBI:15378"/>
        <dbReference type="ChEBI" id="CHEBI:33019"/>
        <dbReference type="ChEBI" id="CHEBI:43474"/>
        <dbReference type="EC" id="3.6.1.1"/>
    </reaction>
</comment>
<comment type="cofactor">
    <cofactor evidence="1">
        <name>Mg(2+)</name>
        <dbReference type="ChEBI" id="CHEBI:18420"/>
    </cofactor>
</comment>
<comment type="subunit">
    <text evidence="1">Homohexamer.</text>
</comment>
<comment type="subcellular location">
    <subcellularLocation>
        <location evidence="1">Cytoplasm</location>
    </subcellularLocation>
</comment>
<comment type="similarity">
    <text evidence="1">Belongs to the PPase family.</text>
</comment>
<dbReference type="EC" id="3.6.1.1" evidence="1"/>
<dbReference type="EMBL" id="AL157959">
    <property type="protein sequence ID" value="CAM08088.1"/>
    <property type="molecule type" value="Genomic_DNA"/>
</dbReference>
<dbReference type="PIR" id="G81930">
    <property type="entry name" value="G81930"/>
</dbReference>
<dbReference type="RefSeq" id="WP_002246850.1">
    <property type="nucleotide sequence ID" value="NC_003116.1"/>
</dbReference>
<dbReference type="SMR" id="Q9JVG3"/>
<dbReference type="EnsemblBacteria" id="CAM08088">
    <property type="protein sequence ID" value="CAM08088"/>
    <property type="gene ID" value="NMA0851"/>
</dbReference>
<dbReference type="KEGG" id="nma:NMA0851"/>
<dbReference type="HOGENOM" id="CLU_073198_1_2_4"/>
<dbReference type="Proteomes" id="UP000000626">
    <property type="component" value="Chromosome"/>
</dbReference>
<dbReference type="GO" id="GO:0005737">
    <property type="term" value="C:cytoplasm"/>
    <property type="evidence" value="ECO:0007669"/>
    <property type="project" value="UniProtKB-SubCell"/>
</dbReference>
<dbReference type="GO" id="GO:0004427">
    <property type="term" value="F:inorganic diphosphate phosphatase activity"/>
    <property type="evidence" value="ECO:0007669"/>
    <property type="project" value="UniProtKB-UniRule"/>
</dbReference>
<dbReference type="GO" id="GO:0000287">
    <property type="term" value="F:magnesium ion binding"/>
    <property type="evidence" value="ECO:0007669"/>
    <property type="project" value="UniProtKB-UniRule"/>
</dbReference>
<dbReference type="GO" id="GO:0006796">
    <property type="term" value="P:phosphate-containing compound metabolic process"/>
    <property type="evidence" value="ECO:0007669"/>
    <property type="project" value="InterPro"/>
</dbReference>
<dbReference type="CDD" id="cd00412">
    <property type="entry name" value="pyrophosphatase"/>
    <property type="match status" value="1"/>
</dbReference>
<dbReference type="FunFam" id="3.90.80.10:FF:000006">
    <property type="entry name" value="Inorganic pyrophosphatase"/>
    <property type="match status" value="1"/>
</dbReference>
<dbReference type="Gene3D" id="3.90.80.10">
    <property type="entry name" value="Inorganic pyrophosphatase"/>
    <property type="match status" value="1"/>
</dbReference>
<dbReference type="HAMAP" id="MF_00209">
    <property type="entry name" value="Inorganic_PPase"/>
    <property type="match status" value="1"/>
</dbReference>
<dbReference type="InterPro" id="IPR008162">
    <property type="entry name" value="Pyrophosphatase"/>
</dbReference>
<dbReference type="InterPro" id="IPR036649">
    <property type="entry name" value="Pyrophosphatase_sf"/>
</dbReference>
<dbReference type="PANTHER" id="PTHR10286">
    <property type="entry name" value="INORGANIC PYROPHOSPHATASE"/>
    <property type="match status" value="1"/>
</dbReference>
<dbReference type="Pfam" id="PF00719">
    <property type="entry name" value="Pyrophosphatase"/>
    <property type="match status" value="1"/>
</dbReference>
<dbReference type="SUPFAM" id="SSF50324">
    <property type="entry name" value="Inorganic pyrophosphatase"/>
    <property type="match status" value="1"/>
</dbReference>
<dbReference type="PROSITE" id="PS00387">
    <property type="entry name" value="PPASE"/>
    <property type="match status" value="1"/>
</dbReference>
<gene>
    <name evidence="1" type="primary">ppa</name>
    <name type="ordered locus">NMA0851</name>
</gene>
<evidence type="ECO:0000255" key="1">
    <source>
        <dbReference type="HAMAP-Rule" id="MF_00209"/>
    </source>
</evidence>
<name>IPYR_NEIMA</name>
<reference key="1">
    <citation type="journal article" date="2000" name="Nature">
        <title>Complete DNA sequence of a serogroup A strain of Neisseria meningitidis Z2491.</title>
        <authorList>
            <person name="Parkhill J."/>
            <person name="Achtman M."/>
            <person name="James K.D."/>
            <person name="Bentley S.D."/>
            <person name="Churcher C.M."/>
            <person name="Klee S.R."/>
            <person name="Morelli G."/>
            <person name="Basham D."/>
            <person name="Brown D."/>
            <person name="Chillingworth T."/>
            <person name="Davies R.M."/>
            <person name="Davis P."/>
            <person name="Devlin K."/>
            <person name="Feltwell T."/>
            <person name="Hamlin N."/>
            <person name="Holroyd S."/>
            <person name="Jagels K."/>
            <person name="Leather S."/>
            <person name="Moule S."/>
            <person name="Mungall K.L."/>
            <person name="Quail M.A."/>
            <person name="Rajandream M.A."/>
            <person name="Rutherford K.M."/>
            <person name="Simmonds M."/>
            <person name="Skelton J."/>
            <person name="Whitehead S."/>
            <person name="Spratt B.G."/>
            <person name="Barrell B.G."/>
        </authorList>
    </citation>
    <scope>NUCLEOTIDE SEQUENCE [LARGE SCALE GENOMIC DNA]</scope>
    <source>
        <strain>DSM 15465 / Z2491</strain>
    </source>
</reference>
<accession>Q9JVG3</accession>
<accession>A1IQQ4</accession>
<sequence>MADFNQILTTGDVDGGIINVVNEIPAGSNHKIEWNRKLAAFQLDRVEPAIFAKPTNYGFIPQTLDEDGDELDVLLVTEQPLATGVFLEARVIGVMKFVDDGEVDDKIVCVPADDRNNGNAYKTLADLPQQLIKQIEFHFNHYKDLKKAGTTKVESWGDAEEAKKVIKESIERWNKQA</sequence>
<proteinExistence type="inferred from homology"/>
<keyword id="KW-0963">Cytoplasm</keyword>
<keyword id="KW-0378">Hydrolase</keyword>
<keyword id="KW-0460">Magnesium</keyword>
<keyword id="KW-0479">Metal-binding</keyword>
<organism>
    <name type="scientific">Neisseria meningitidis serogroup A / serotype 4A (strain DSM 15465 / Z2491)</name>
    <dbReference type="NCBI Taxonomy" id="122587"/>
    <lineage>
        <taxon>Bacteria</taxon>
        <taxon>Pseudomonadati</taxon>
        <taxon>Pseudomonadota</taxon>
        <taxon>Betaproteobacteria</taxon>
        <taxon>Neisseriales</taxon>
        <taxon>Neisseriaceae</taxon>
        <taxon>Neisseria</taxon>
    </lineage>
</organism>
<feature type="chain" id="PRO_0000137514" description="Inorganic pyrophosphatase">
    <location>
        <begin position="1"/>
        <end position="177"/>
    </location>
</feature>
<feature type="binding site" evidence="1">
    <location>
        <position position="31"/>
    </location>
    <ligand>
        <name>substrate</name>
    </ligand>
</feature>
<feature type="binding site" evidence="1">
    <location>
        <position position="45"/>
    </location>
    <ligand>
        <name>substrate</name>
    </ligand>
</feature>
<feature type="binding site" evidence="1">
    <location>
        <position position="57"/>
    </location>
    <ligand>
        <name>substrate</name>
    </ligand>
</feature>
<feature type="binding site" evidence="1">
    <location>
        <position position="67"/>
    </location>
    <ligand>
        <name>Mg(2+)</name>
        <dbReference type="ChEBI" id="CHEBI:18420"/>
        <label>1</label>
    </ligand>
</feature>
<feature type="binding site" evidence="1">
    <location>
        <position position="72"/>
    </location>
    <ligand>
        <name>Mg(2+)</name>
        <dbReference type="ChEBI" id="CHEBI:18420"/>
        <label>1</label>
    </ligand>
</feature>
<feature type="binding site" evidence="1">
    <location>
        <position position="72"/>
    </location>
    <ligand>
        <name>Mg(2+)</name>
        <dbReference type="ChEBI" id="CHEBI:18420"/>
        <label>2</label>
    </ligand>
</feature>
<feature type="binding site" evidence="1">
    <location>
        <position position="104"/>
    </location>
    <ligand>
        <name>Mg(2+)</name>
        <dbReference type="ChEBI" id="CHEBI:18420"/>
        <label>1</label>
    </ligand>
</feature>
<feature type="binding site" evidence="1">
    <location>
        <position position="142"/>
    </location>
    <ligand>
        <name>substrate</name>
    </ligand>
</feature>
<protein>
    <recommendedName>
        <fullName evidence="1">Inorganic pyrophosphatase</fullName>
        <ecNumber evidence="1">3.6.1.1</ecNumber>
    </recommendedName>
    <alternativeName>
        <fullName evidence="1">Pyrophosphate phospho-hydrolase</fullName>
        <shortName evidence="1">PPase</shortName>
    </alternativeName>
</protein>